<name>LCL3_YEAS8</name>
<gene>
    <name type="primary">LCL3</name>
    <name type="ORF">EC1118_1G1_2036g</name>
</gene>
<dbReference type="EC" id="3.1.-.-"/>
<dbReference type="EMBL" id="FN393070">
    <property type="protein sequence ID" value="CAY79679.1"/>
    <property type="molecule type" value="Genomic_DNA"/>
</dbReference>
<dbReference type="HOGENOM" id="CLU_046484_0_1_1"/>
<dbReference type="OrthoDB" id="16780at4893"/>
<dbReference type="Proteomes" id="UP000000286">
    <property type="component" value="Chromosome VII, Scaffold EC1118_1G1"/>
</dbReference>
<dbReference type="GO" id="GO:0016020">
    <property type="term" value="C:membrane"/>
    <property type="evidence" value="ECO:0007669"/>
    <property type="project" value="UniProtKB-SubCell"/>
</dbReference>
<dbReference type="GO" id="GO:0005739">
    <property type="term" value="C:mitochondrion"/>
    <property type="evidence" value="ECO:0007669"/>
    <property type="project" value="UniProtKB-SubCell"/>
</dbReference>
<dbReference type="GO" id="GO:0004519">
    <property type="term" value="F:endonuclease activity"/>
    <property type="evidence" value="ECO:0007669"/>
    <property type="project" value="UniProtKB-KW"/>
</dbReference>
<dbReference type="GO" id="GO:0046872">
    <property type="term" value="F:metal ion binding"/>
    <property type="evidence" value="ECO:0007669"/>
    <property type="project" value="UniProtKB-KW"/>
</dbReference>
<dbReference type="Gene3D" id="2.40.50.90">
    <property type="match status" value="1"/>
</dbReference>
<dbReference type="InterPro" id="IPR035437">
    <property type="entry name" value="SNase_OB-fold_sf"/>
</dbReference>
<dbReference type="InterPro" id="IPR016071">
    <property type="entry name" value="Staphylococal_nuclease_OB-fold"/>
</dbReference>
<dbReference type="PANTHER" id="PTHR12302">
    <property type="entry name" value="EBNA2 BINDING PROTEIN P100"/>
    <property type="match status" value="1"/>
</dbReference>
<dbReference type="PANTHER" id="PTHR12302:SF3">
    <property type="entry name" value="SERINE_THREONINE-PROTEIN KINASE 31"/>
    <property type="match status" value="1"/>
</dbReference>
<dbReference type="Pfam" id="PF00565">
    <property type="entry name" value="SNase"/>
    <property type="match status" value="1"/>
</dbReference>
<dbReference type="SMART" id="SM00318">
    <property type="entry name" value="SNc"/>
    <property type="match status" value="1"/>
</dbReference>
<dbReference type="SUPFAM" id="SSF50199">
    <property type="entry name" value="Staphylococcal nuclease"/>
    <property type="match status" value="1"/>
</dbReference>
<dbReference type="PROSITE" id="PS50830">
    <property type="entry name" value="TNASE_3"/>
    <property type="match status" value="1"/>
</dbReference>
<organism>
    <name type="scientific">Saccharomyces cerevisiae (strain Lalvin EC1118 / Prise de mousse)</name>
    <name type="common">Baker's yeast</name>
    <dbReference type="NCBI Taxonomy" id="643680"/>
    <lineage>
        <taxon>Eukaryota</taxon>
        <taxon>Fungi</taxon>
        <taxon>Dikarya</taxon>
        <taxon>Ascomycota</taxon>
        <taxon>Saccharomycotina</taxon>
        <taxon>Saccharomycetes</taxon>
        <taxon>Saccharomycetales</taxon>
        <taxon>Saccharomycetaceae</taxon>
        <taxon>Saccharomyces</taxon>
    </lineage>
</organism>
<evidence type="ECO:0000250" key="1"/>
<evidence type="ECO:0000255" key="2"/>
<evidence type="ECO:0000255" key="3">
    <source>
        <dbReference type="PROSITE-ProRule" id="PRU00272"/>
    </source>
</evidence>
<evidence type="ECO:0000305" key="4"/>
<keyword id="KW-0106">Calcium</keyword>
<keyword id="KW-0255">Endonuclease</keyword>
<keyword id="KW-0378">Hydrolase</keyword>
<keyword id="KW-0472">Membrane</keyword>
<keyword id="KW-0479">Metal-binding</keyword>
<keyword id="KW-0496">Mitochondrion</keyword>
<keyword id="KW-0540">Nuclease</keyword>
<keyword id="KW-0812">Transmembrane</keyword>
<keyword id="KW-1133">Transmembrane helix</keyword>
<feature type="chain" id="PRO_0000408692" description="Probable endonuclease LCL3">
    <location>
        <begin position="1"/>
        <end position="274"/>
    </location>
</feature>
<feature type="transmembrane region" description="Helical" evidence="2">
    <location>
        <begin position="15"/>
        <end position="32"/>
    </location>
</feature>
<feature type="domain" description="TNase-like" evidence="3">
    <location>
        <begin position="53"/>
        <end position="261"/>
    </location>
</feature>
<feature type="active site" evidence="3">
    <location>
        <position position="151"/>
    </location>
</feature>
<feature type="active site" evidence="3">
    <location>
        <position position="159"/>
    </location>
</feature>
<feature type="active site" evidence="3">
    <location>
        <position position="199"/>
    </location>
</feature>
<feature type="binding site" evidence="3">
    <location>
        <position position="156"/>
    </location>
    <ligand>
        <name>Ca(2+)</name>
        <dbReference type="ChEBI" id="CHEBI:29108"/>
    </ligand>
</feature>
<protein>
    <recommendedName>
        <fullName>Probable endonuclease LCL3</fullName>
        <ecNumber>3.1.-.-</ecNumber>
    </recommendedName>
</protein>
<proteinExistence type="inferred from homology"/>
<sequence length="274" mass="32054">MREGDSNSKKSADVAVLSIILTGSTLTLIYTYKRYLTQFKRTNDIPRRIFRKHWLYGKVTSVGDGDNFHFFHMPGGIRGGWGWLRPVPQMIKNGSTAEKLVGDSRNMRFFNFNWITHGRSTKSKIQKAKSQFLKLNVPYKNRKNLPTIPIRLCGIDAPERAHFGNPAQPFGNEALIWLQNRILGKKVWVKPLSIDQYNRCVARVSYWDWFGGWKDLSLEMLKDGLAVVYEGKVNTEFDDREDKYRYYEFLARSRKKGLWIQNKFETPGEYKKRI</sequence>
<comment type="subcellular location">
    <subcellularLocation>
        <location>Mitochondrion</location>
    </subcellularLocation>
    <subcellularLocation>
        <location evidence="1">Membrane</location>
        <topology evidence="1">Single-pass membrane protein</topology>
    </subcellularLocation>
</comment>
<comment type="similarity">
    <text evidence="4">Belongs to the LCL3 family.</text>
</comment>
<reference key="1">
    <citation type="journal article" date="2009" name="Proc. Natl. Acad. Sci. U.S.A.">
        <title>Eukaryote-to-eukaryote gene transfer events revealed by the genome sequence of the wine yeast Saccharomyces cerevisiae EC1118.</title>
        <authorList>
            <person name="Novo M."/>
            <person name="Bigey F."/>
            <person name="Beyne E."/>
            <person name="Galeote V."/>
            <person name="Gavory F."/>
            <person name="Mallet S."/>
            <person name="Cambon B."/>
            <person name="Legras J.-L."/>
            <person name="Wincker P."/>
            <person name="Casaregola S."/>
            <person name="Dequin S."/>
        </authorList>
    </citation>
    <scope>NUCLEOTIDE SEQUENCE [LARGE SCALE GENOMIC DNA]</scope>
    <source>
        <strain>Lalvin EC1118 / Prise de mousse</strain>
    </source>
</reference>
<accession>C8Z8G3</accession>